<gene>
    <name evidence="1" type="primary">atpB</name>
    <name type="ordered locus">Dshi_3030</name>
</gene>
<proteinExistence type="inferred from homology"/>
<dbReference type="EMBL" id="CP000830">
    <property type="protein sequence ID" value="ABV94763.1"/>
    <property type="molecule type" value="Genomic_DNA"/>
</dbReference>
<dbReference type="RefSeq" id="WP_012179691.1">
    <property type="nucleotide sequence ID" value="NC_009952.1"/>
</dbReference>
<dbReference type="SMR" id="A8LKI0"/>
<dbReference type="STRING" id="398580.Dshi_3030"/>
<dbReference type="KEGG" id="dsh:Dshi_3030"/>
<dbReference type="eggNOG" id="COG0356">
    <property type="taxonomic scope" value="Bacteria"/>
</dbReference>
<dbReference type="HOGENOM" id="CLU_041018_0_2_5"/>
<dbReference type="OrthoDB" id="9809130at2"/>
<dbReference type="Proteomes" id="UP000006833">
    <property type="component" value="Chromosome"/>
</dbReference>
<dbReference type="GO" id="GO:0005886">
    <property type="term" value="C:plasma membrane"/>
    <property type="evidence" value="ECO:0007669"/>
    <property type="project" value="UniProtKB-SubCell"/>
</dbReference>
<dbReference type="GO" id="GO:0045259">
    <property type="term" value="C:proton-transporting ATP synthase complex"/>
    <property type="evidence" value="ECO:0007669"/>
    <property type="project" value="UniProtKB-KW"/>
</dbReference>
<dbReference type="GO" id="GO:0046933">
    <property type="term" value="F:proton-transporting ATP synthase activity, rotational mechanism"/>
    <property type="evidence" value="ECO:0007669"/>
    <property type="project" value="UniProtKB-UniRule"/>
</dbReference>
<dbReference type="CDD" id="cd00310">
    <property type="entry name" value="ATP-synt_Fo_a_6"/>
    <property type="match status" value="1"/>
</dbReference>
<dbReference type="Gene3D" id="1.20.120.220">
    <property type="entry name" value="ATP synthase, F0 complex, subunit A"/>
    <property type="match status" value="1"/>
</dbReference>
<dbReference type="HAMAP" id="MF_01393">
    <property type="entry name" value="ATP_synth_a_bact"/>
    <property type="match status" value="1"/>
</dbReference>
<dbReference type="InterPro" id="IPR000568">
    <property type="entry name" value="ATP_synth_F0_asu"/>
</dbReference>
<dbReference type="InterPro" id="IPR023011">
    <property type="entry name" value="ATP_synth_F0_asu_AS"/>
</dbReference>
<dbReference type="InterPro" id="IPR045083">
    <property type="entry name" value="ATP_synth_F0_asu_bact/mt"/>
</dbReference>
<dbReference type="InterPro" id="IPR035908">
    <property type="entry name" value="F0_ATP_A_sf"/>
</dbReference>
<dbReference type="NCBIfam" id="TIGR01131">
    <property type="entry name" value="ATP_synt_6_or_A"/>
    <property type="match status" value="1"/>
</dbReference>
<dbReference type="NCBIfam" id="NF004482">
    <property type="entry name" value="PRK05815.2-4"/>
    <property type="match status" value="1"/>
</dbReference>
<dbReference type="PANTHER" id="PTHR11410">
    <property type="entry name" value="ATP SYNTHASE SUBUNIT A"/>
    <property type="match status" value="1"/>
</dbReference>
<dbReference type="PANTHER" id="PTHR11410:SF0">
    <property type="entry name" value="ATP SYNTHASE SUBUNIT A"/>
    <property type="match status" value="1"/>
</dbReference>
<dbReference type="Pfam" id="PF00119">
    <property type="entry name" value="ATP-synt_A"/>
    <property type="match status" value="1"/>
</dbReference>
<dbReference type="PRINTS" id="PR00123">
    <property type="entry name" value="ATPASEA"/>
</dbReference>
<dbReference type="SUPFAM" id="SSF81336">
    <property type="entry name" value="F1F0 ATP synthase subunit A"/>
    <property type="match status" value="1"/>
</dbReference>
<dbReference type="PROSITE" id="PS00449">
    <property type="entry name" value="ATPASE_A"/>
    <property type="match status" value="1"/>
</dbReference>
<comment type="function">
    <text evidence="1">Key component of the proton channel; it plays a direct role in the translocation of protons across the membrane.</text>
</comment>
<comment type="subunit">
    <text evidence="1">F-type ATPases have 2 components, CF(1) - the catalytic core - and CF(0) - the membrane proton channel. CF(1) has five subunits: alpha(3), beta(3), gamma(1), delta(1), epsilon(1). CF(0) has four main subunits: a, b, b' and c.</text>
</comment>
<comment type="subcellular location">
    <subcellularLocation>
        <location evidence="1">Cell inner membrane</location>
        <topology evidence="1">Multi-pass membrane protein</topology>
    </subcellularLocation>
</comment>
<comment type="similarity">
    <text evidence="1">Belongs to the ATPase A chain family.</text>
</comment>
<sequence>MATEEGTGLTFYPMDQFIVSPLFGDGPVHFYTPTNVTLWMALAVAAIALLLVAGTRGRAVVPSRAQSIAELAYGFVYKMVEDVTGKDGIKYFPYIFTLFMFILVANFLGLIPMSFTTTSHIAVTAVLALAVFITVTVIGFVKNGAGFLSLFWVASAPLALRPILAVIEIISYFVRPVSHSIRLAGNMMAGHAVLKVFAGFAQVAAVAPIAIIGVMAIYGLEVLVSAIQAYVFTILTCVYLKDALHPHH</sequence>
<accession>A8LKI0</accession>
<organism>
    <name type="scientific">Dinoroseobacter shibae (strain DSM 16493 / NCIMB 14021 / DFL 12)</name>
    <dbReference type="NCBI Taxonomy" id="398580"/>
    <lineage>
        <taxon>Bacteria</taxon>
        <taxon>Pseudomonadati</taxon>
        <taxon>Pseudomonadota</taxon>
        <taxon>Alphaproteobacteria</taxon>
        <taxon>Rhodobacterales</taxon>
        <taxon>Roseobacteraceae</taxon>
        <taxon>Dinoroseobacter</taxon>
    </lineage>
</organism>
<reference key="1">
    <citation type="journal article" date="2010" name="ISME J.">
        <title>The complete genome sequence of the algal symbiont Dinoroseobacter shibae: a hitchhiker's guide to life in the sea.</title>
        <authorList>
            <person name="Wagner-Dobler I."/>
            <person name="Ballhausen B."/>
            <person name="Berger M."/>
            <person name="Brinkhoff T."/>
            <person name="Buchholz I."/>
            <person name="Bunk B."/>
            <person name="Cypionka H."/>
            <person name="Daniel R."/>
            <person name="Drepper T."/>
            <person name="Gerdts G."/>
            <person name="Hahnke S."/>
            <person name="Han C."/>
            <person name="Jahn D."/>
            <person name="Kalhoefer D."/>
            <person name="Kiss H."/>
            <person name="Klenk H.P."/>
            <person name="Kyrpides N."/>
            <person name="Liebl W."/>
            <person name="Liesegang H."/>
            <person name="Meincke L."/>
            <person name="Pati A."/>
            <person name="Petersen J."/>
            <person name="Piekarski T."/>
            <person name="Pommerenke C."/>
            <person name="Pradella S."/>
            <person name="Pukall R."/>
            <person name="Rabus R."/>
            <person name="Stackebrandt E."/>
            <person name="Thole S."/>
            <person name="Thompson L."/>
            <person name="Tielen P."/>
            <person name="Tomasch J."/>
            <person name="von Jan M."/>
            <person name="Wanphrut N."/>
            <person name="Wichels A."/>
            <person name="Zech H."/>
            <person name="Simon M."/>
        </authorList>
    </citation>
    <scope>NUCLEOTIDE SEQUENCE [LARGE SCALE GENOMIC DNA]</scope>
    <source>
        <strain>DSM 16493 / NCIMB 14021 / DFL 12</strain>
    </source>
</reference>
<protein>
    <recommendedName>
        <fullName evidence="1">ATP synthase subunit a</fullName>
    </recommendedName>
    <alternativeName>
        <fullName evidence="1">ATP synthase F0 sector subunit a</fullName>
    </alternativeName>
    <alternativeName>
        <fullName evidence="1">F-ATPase subunit 6</fullName>
    </alternativeName>
</protein>
<evidence type="ECO:0000255" key="1">
    <source>
        <dbReference type="HAMAP-Rule" id="MF_01393"/>
    </source>
</evidence>
<keyword id="KW-0066">ATP synthesis</keyword>
<keyword id="KW-0997">Cell inner membrane</keyword>
<keyword id="KW-1003">Cell membrane</keyword>
<keyword id="KW-0138">CF(0)</keyword>
<keyword id="KW-0375">Hydrogen ion transport</keyword>
<keyword id="KW-0406">Ion transport</keyword>
<keyword id="KW-0472">Membrane</keyword>
<keyword id="KW-1185">Reference proteome</keyword>
<keyword id="KW-0812">Transmembrane</keyword>
<keyword id="KW-1133">Transmembrane helix</keyword>
<keyword id="KW-0813">Transport</keyword>
<feature type="chain" id="PRO_0000362288" description="ATP synthase subunit a">
    <location>
        <begin position="1"/>
        <end position="248"/>
    </location>
</feature>
<feature type="transmembrane region" description="Helical" evidence="1">
    <location>
        <begin position="34"/>
        <end position="54"/>
    </location>
</feature>
<feature type="transmembrane region" description="Helical" evidence="1">
    <location>
        <begin position="91"/>
        <end position="111"/>
    </location>
</feature>
<feature type="transmembrane region" description="Helical" evidence="1">
    <location>
        <begin position="121"/>
        <end position="141"/>
    </location>
</feature>
<feature type="transmembrane region" description="Helical" evidence="1">
    <location>
        <begin position="147"/>
        <end position="167"/>
    </location>
</feature>
<feature type="transmembrane region" description="Helical" evidence="1">
    <location>
        <begin position="197"/>
        <end position="217"/>
    </location>
</feature>
<feature type="transmembrane region" description="Helical" evidence="1">
    <location>
        <begin position="220"/>
        <end position="240"/>
    </location>
</feature>
<name>ATP6_DINSH</name>